<keyword id="KW-1185">Reference proteome</keyword>
<gene>
    <name type="ordered locus">OB2685</name>
</gene>
<proteinExistence type="inferred from homology"/>
<accession>Q8EN05</accession>
<feature type="chain" id="PRO_0000210013" description="UPF0337 protein OB2685">
    <location>
        <begin position="1"/>
        <end position="58"/>
    </location>
</feature>
<feature type="region of interest" description="Disordered" evidence="1">
    <location>
        <begin position="1"/>
        <end position="58"/>
    </location>
</feature>
<feature type="compositionally biased region" description="Basic and acidic residues" evidence="1">
    <location>
        <begin position="1"/>
        <end position="22"/>
    </location>
</feature>
<feature type="compositionally biased region" description="Basic and acidic residues" evidence="1">
    <location>
        <begin position="30"/>
        <end position="46"/>
    </location>
</feature>
<sequence>MSDGMKDKAKAIGKKIKGEAKDQWGSATDDPQRKAEGKRDKAKGEAQDTIADAKNNNK</sequence>
<protein>
    <recommendedName>
        <fullName>UPF0337 protein OB2685</fullName>
    </recommendedName>
</protein>
<evidence type="ECO:0000256" key="1">
    <source>
        <dbReference type="SAM" id="MobiDB-lite"/>
    </source>
</evidence>
<evidence type="ECO:0000305" key="2"/>
<dbReference type="EMBL" id="BA000028">
    <property type="protein sequence ID" value="BAC14641.1"/>
    <property type="molecule type" value="Genomic_DNA"/>
</dbReference>
<dbReference type="RefSeq" id="WP_011067079.1">
    <property type="nucleotide sequence ID" value="NC_004193.1"/>
</dbReference>
<dbReference type="SMR" id="Q8EN05"/>
<dbReference type="STRING" id="221109.gene:10734937"/>
<dbReference type="KEGG" id="oih:OB2685"/>
<dbReference type="eggNOG" id="COG3237">
    <property type="taxonomic scope" value="Bacteria"/>
</dbReference>
<dbReference type="HOGENOM" id="CLU_135567_3_0_9"/>
<dbReference type="OrthoDB" id="2941817at2"/>
<dbReference type="Proteomes" id="UP000000822">
    <property type="component" value="Chromosome"/>
</dbReference>
<dbReference type="Gene3D" id="1.10.1470.10">
    <property type="entry name" value="YjbJ"/>
    <property type="match status" value="1"/>
</dbReference>
<dbReference type="InterPro" id="IPR008462">
    <property type="entry name" value="CsbD"/>
</dbReference>
<dbReference type="InterPro" id="IPR036629">
    <property type="entry name" value="YjbJ_sf"/>
</dbReference>
<dbReference type="Pfam" id="PF05532">
    <property type="entry name" value="CsbD"/>
    <property type="match status" value="1"/>
</dbReference>
<dbReference type="SUPFAM" id="SSF69047">
    <property type="entry name" value="Hypothetical protein YjbJ"/>
    <property type="match status" value="1"/>
</dbReference>
<comment type="similarity">
    <text evidence="2">Belongs to the UPF0337 (CsbD) family.</text>
</comment>
<organism>
    <name type="scientific">Oceanobacillus iheyensis (strain DSM 14371 / CIP 107618 / JCM 11309 / KCTC 3954 / HTE831)</name>
    <dbReference type="NCBI Taxonomy" id="221109"/>
    <lineage>
        <taxon>Bacteria</taxon>
        <taxon>Bacillati</taxon>
        <taxon>Bacillota</taxon>
        <taxon>Bacilli</taxon>
        <taxon>Bacillales</taxon>
        <taxon>Bacillaceae</taxon>
        <taxon>Oceanobacillus</taxon>
    </lineage>
</organism>
<name>Y2685_OCEIH</name>
<reference key="1">
    <citation type="journal article" date="2002" name="Nucleic Acids Res.">
        <title>Genome sequence of Oceanobacillus iheyensis isolated from the Iheya Ridge and its unexpected adaptive capabilities to extreme environments.</title>
        <authorList>
            <person name="Takami H."/>
            <person name="Takaki Y."/>
            <person name="Uchiyama I."/>
        </authorList>
    </citation>
    <scope>NUCLEOTIDE SEQUENCE [LARGE SCALE GENOMIC DNA]</scope>
    <source>
        <strain>DSM 14371 / CIP 107618 / JCM 11309 / KCTC 3954 / HTE831</strain>
    </source>
</reference>